<proteinExistence type="inferred from homology"/>
<organism>
    <name type="scientific">Fervidobacterium nodosum (strain ATCC 35602 / DSM 5306 / Rt17-B1)</name>
    <dbReference type="NCBI Taxonomy" id="381764"/>
    <lineage>
        <taxon>Bacteria</taxon>
        <taxon>Thermotogati</taxon>
        <taxon>Thermotogota</taxon>
        <taxon>Thermotogae</taxon>
        <taxon>Thermotogales</taxon>
        <taxon>Fervidobacteriaceae</taxon>
        <taxon>Fervidobacterium</taxon>
    </lineage>
</organism>
<dbReference type="EC" id="1.3.1.98" evidence="1"/>
<dbReference type="EMBL" id="CP000771">
    <property type="protein sequence ID" value="ABS60134.1"/>
    <property type="molecule type" value="Genomic_DNA"/>
</dbReference>
<dbReference type="SMR" id="A7HJQ1"/>
<dbReference type="STRING" id="381764.Fnod_0268"/>
<dbReference type="KEGG" id="fno:Fnod_0268"/>
<dbReference type="eggNOG" id="COG0812">
    <property type="taxonomic scope" value="Bacteria"/>
</dbReference>
<dbReference type="HOGENOM" id="CLU_035304_1_1_0"/>
<dbReference type="OrthoDB" id="9804753at2"/>
<dbReference type="UniPathway" id="UPA00219"/>
<dbReference type="Proteomes" id="UP000002415">
    <property type="component" value="Chromosome"/>
</dbReference>
<dbReference type="GO" id="GO:0005829">
    <property type="term" value="C:cytosol"/>
    <property type="evidence" value="ECO:0007669"/>
    <property type="project" value="TreeGrafter"/>
</dbReference>
<dbReference type="GO" id="GO:0071949">
    <property type="term" value="F:FAD binding"/>
    <property type="evidence" value="ECO:0007669"/>
    <property type="project" value="InterPro"/>
</dbReference>
<dbReference type="GO" id="GO:0008762">
    <property type="term" value="F:UDP-N-acetylmuramate dehydrogenase activity"/>
    <property type="evidence" value="ECO:0007669"/>
    <property type="project" value="UniProtKB-UniRule"/>
</dbReference>
<dbReference type="GO" id="GO:0051301">
    <property type="term" value="P:cell division"/>
    <property type="evidence" value="ECO:0007669"/>
    <property type="project" value="UniProtKB-KW"/>
</dbReference>
<dbReference type="GO" id="GO:0071555">
    <property type="term" value="P:cell wall organization"/>
    <property type="evidence" value="ECO:0007669"/>
    <property type="project" value="UniProtKB-KW"/>
</dbReference>
<dbReference type="GO" id="GO:0009252">
    <property type="term" value="P:peptidoglycan biosynthetic process"/>
    <property type="evidence" value="ECO:0007669"/>
    <property type="project" value="UniProtKB-UniRule"/>
</dbReference>
<dbReference type="GO" id="GO:0008360">
    <property type="term" value="P:regulation of cell shape"/>
    <property type="evidence" value="ECO:0007669"/>
    <property type="project" value="UniProtKB-KW"/>
</dbReference>
<dbReference type="Gene3D" id="3.30.465.10">
    <property type="match status" value="1"/>
</dbReference>
<dbReference type="Gene3D" id="3.90.78.10">
    <property type="entry name" value="UDP-N-acetylenolpyruvoylglucosamine reductase, C-terminal domain"/>
    <property type="match status" value="1"/>
</dbReference>
<dbReference type="Gene3D" id="3.30.43.10">
    <property type="entry name" value="Uridine Diphospho-n-acetylenolpyruvylglucosamine Reductase, domain 2"/>
    <property type="match status" value="1"/>
</dbReference>
<dbReference type="HAMAP" id="MF_00037">
    <property type="entry name" value="MurB"/>
    <property type="match status" value="1"/>
</dbReference>
<dbReference type="InterPro" id="IPR016166">
    <property type="entry name" value="FAD-bd_PCMH"/>
</dbReference>
<dbReference type="InterPro" id="IPR036318">
    <property type="entry name" value="FAD-bd_PCMH-like_sf"/>
</dbReference>
<dbReference type="InterPro" id="IPR016167">
    <property type="entry name" value="FAD-bd_PCMH_sub1"/>
</dbReference>
<dbReference type="InterPro" id="IPR016169">
    <property type="entry name" value="FAD-bd_PCMH_sub2"/>
</dbReference>
<dbReference type="InterPro" id="IPR003170">
    <property type="entry name" value="MurB"/>
</dbReference>
<dbReference type="InterPro" id="IPR011601">
    <property type="entry name" value="MurB_C"/>
</dbReference>
<dbReference type="InterPro" id="IPR036635">
    <property type="entry name" value="MurB_C_sf"/>
</dbReference>
<dbReference type="InterPro" id="IPR006094">
    <property type="entry name" value="Oxid_FAD_bind_N"/>
</dbReference>
<dbReference type="NCBIfam" id="TIGR00179">
    <property type="entry name" value="murB"/>
    <property type="match status" value="1"/>
</dbReference>
<dbReference type="NCBIfam" id="NF010480">
    <property type="entry name" value="PRK13905.1"/>
    <property type="match status" value="1"/>
</dbReference>
<dbReference type="PANTHER" id="PTHR21071">
    <property type="entry name" value="UDP-N-ACETYLENOLPYRUVOYLGLUCOSAMINE REDUCTASE"/>
    <property type="match status" value="1"/>
</dbReference>
<dbReference type="PANTHER" id="PTHR21071:SF4">
    <property type="entry name" value="UDP-N-ACETYLENOLPYRUVOYLGLUCOSAMINE REDUCTASE"/>
    <property type="match status" value="1"/>
</dbReference>
<dbReference type="Pfam" id="PF01565">
    <property type="entry name" value="FAD_binding_4"/>
    <property type="match status" value="1"/>
</dbReference>
<dbReference type="Pfam" id="PF02873">
    <property type="entry name" value="MurB_C"/>
    <property type="match status" value="1"/>
</dbReference>
<dbReference type="SUPFAM" id="SSF56176">
    <property type="entry name" value="FAD-binding/transporter-associated domain-like"/>
    <property type="match status" value="1"/>
</dbReference>
<dbReference type="SUPFAM" id="SSF56194">
    <property type="entry name" value="Uridine diphospho-N-Acetylenolpyruvylglucosamine reductase, MurB, C-terminal domain"/>
    <property type="match status" value="1"/>
</dbReference>
<dbReference type="PROSITE" id="PS51387">
    <property type="entry name" value="FAD_PCMH"/>
    <property type="match status" value="1"/>
</dbReference>
<gene>
    <name evidence="1" type="primary">murB</name>
    <name type="ordered locus">Fnod_0268</name>
</gene>
<name>MURB_FERNB</name>
<accession>A7HJQ1</accession>
<protein>
    <recommendedName>
        <fullName evidence="1">UDP-N-acetylenolpyruvoylglucosamine reductase</fullName>
        <ecNumber evidence="1">1.3.1.98</ecNumber>
    </recommendedName>
    <alternativeName>
        <fullName evidence="1">UDP-N-acetylmuramate dehydrogenase</fullName>
    </alternativeName>
</protein>
<reference key="1">
    <citation type="submission" date="2007-07" db="EMBL/GenBank/DDBJ databases">
        <title>Complete sequence of Fervidobacterium nodosum Rt17-B1.</title>
        <authorList>
            <consortium name="US DOE Joint Genome Institute"/>
            <person name="Copeland A."/>
            <person name="Lucas S."/>
            <person name="Lapidus A."/>
            <person name="Barry K."/>
            <person name="Glavina del Rio T."/>
            <person name="Dalin E."/>
            <person name="Tice H."/>
            <person name="Pitluck S."/>
            <person name="Saunders E."/>
            <person name="Brettin T."/>
            <person name="Bruce D."/>
            <person name="Detter J.C."/>
            <person name="Han C."/>
            <person name="Schmutz J."/>
            <person name="Larimer F."/>
            <person name="Land M."/>
            <person name="Hauser L."/>
            <person name="Kyrpides N."/>
            <person name="Mikhailova N."/>
            <person name="Nelson K."/>
            <person name="Gogarten J.P."/>
            <person name="Noll K."/>
            <person name="Richardson P."/>
        </authorList>
    </citation>
    <scope>NUCLEOTIDE SEQUENCE [LARGE SCALE GENOMIC DNA]</scope>
    <source>
        <strain>ATCC 35602 / DSM 5306 / Rt17-B1</strain>
    </source>
</reference>
<keyword id="KW-0131">Cell cycle</keyword>
<keyword id="KW-0132">Cell division</keyword>
<keyword id="KW-0133">Cell shape</keyword>
<keyword id="KW-0961">Cell wall biogenesis/degradation</keyword>
<keyword id="KW-0963">Cytoplasm</keyword>
<keyword id="KW-0274">FAD</keyword>
<keyword id="KW-0285">Flavoprotein</keyword>
<keyword id="KW-0521">NADP</keyword>
<keyword id="KW-0560">Oxidoreductase</keyword>
<keyword id="KW-0573">Peptidoglycan synthesis</keyword>
<keyword id="KW-1185">Reference proteome</keyword>
<sequence>MDYMLNISTNITRKILETLWNYGCDLFLNEELADHVNFKLGGKVPLFAIPNSTNGFIETINLLNKEGIEFRIIGRGTNILPVDEPLPYVVVSTERMDDVFVDNEKIQVGAGLSFKKLCLVALENELSGFENAFGLPGSVGGAVYMNAGCYGWETAENIVEVVAFDGKDIIKLGKNEIGFGYRTSIFKSEKNLIILQATFKLKKGNKNEIYNLMLETMKKRYEKQPLEFPSAGSVFKRPRPDFYVGTAIESLGLKGFSIGGAQISEKHAGFIINKGGAKAEDVLKLIEYVKDKVREKYNVELETEIEIWK</sequence>
<comment type="function">
    <text evidence="1">Cell wall formation.</text>
</comment>
<comment type="catalytic activity">
    <reaction evidence="1">
        <text>UDP-N-acetyl-alpha-D-muramate + NADP(+) = UDP-N-acetyl-3-O-(1-carboxyvinyl)-alpha-D-glucosamine + NADPH + H(+)</text>
        <dbReference type="Rhea" id="RHEA:12248"/>
        <dbReference type="ChEBI" id="CHEBI:15378"/>
        <dbReference type="ChEBI" id="CHEBI:57783"/>
        <dbReference type="ChEBI" id="CHEBI:58349"/>
        <dbReference type="ChEBI" id="CHEBI:68483"/>
        <dbReference type="ChEBI" id="CHEBI:70757"/>
        <dbReference type="EC" id="1.3.1.98"/>
    </reaction>
</comment>
<comment type="cofactor">
    <cofactor evidence="1">
        <name>FAD</name>
        <dbReference type="ChEBI" id="CHEBI:57692"/>
    </cofactor>
</comment>
<comment type="pathway">
    <text evidence="1">Cell wall biogenesis; peptidoglycan biosynthesis.</text>
</comment>
<comment type="subcellular location">
    <subcellularLocation>
        <location evidence="1">Cytoplasm</location>
    </subcellularLocation>
</comment>
<comment type="similarity">
    <text evidence="1">Belongs to the MurB family.</text>
</comment>
<feature type="chain" id="PRO_0000332459" description="UDP-N-acetylenolpyruvoylglucosamine reductase">
    <location>
        <begin position="1"/>
        <end position="309"/>
    </location>
</feature>
<feature type="domain" description="FAD-binding PCMH-type" evidence="1">
    <location>
        <begin position="40"/>
        <end position="204"/>
    </location>
</feature>
<feature type="active site" evidence="1">
    <location>
        <position position="182"/>
    </location>
</feature>
<feature type="active site" description="Proton donor" evidence="1">
    <location>
        <position position="233"/>
    </location>
</feature>
<feature type="active site" evidence="1">
    <location>
        <position position="304"/>
    </location>
</feature>
<evidence type="ECO:0000255" key="1">
    <source>
        <dbReference type="HAMAP-Rule" id="MF_00037"/>
    </source>
</evidence>